<accession>Q2G1M5</accession>
<accession>Q6X7T9</accession>
<organism>
    <name type="scientific">Staphylococcus aureus (strain NCTC 8325 / PS 47)</name>
    <dbReference type="NCBI Taxonomy" id="93061"/>
    <lineage>
        <taxon>Bacteria</taxon>
        <taxon>Bacillati</taxon>
        <taxon>Bacillota</taxon>
        <taxon>Bacilli</taxon>
        <taxon>Bacillales</taxon>
        <taxon>Staphylococcaceae</taxon>
        <taxon>Staphylococcus</taxon>
    </lineage>
</organism>
<dbReference type="EC" id="2.7.1.225" evidence="4"/>
<dbReference type="EMBL" id="AY251022">
    <property type="protein sequence ID" value="AAP82071.1"/>
    <property type="molecule type" value="Genomic_DNA"/>
</dbReference>
<dbReference type="EMBL" id="CP000253">
    <property type="protein sequence ID" value="ABD29266.1"/>
    <property type="molecule type" value="Genomic_DNA"/>
</dbReference>
<dbReference type="RefSeq" id="WP_001015549.1">
    <property type="nucleotide sequence ID" value="NZ_LS483365.1"/>
</dbReference>
<dbReference type="RefSeq" id="YP_498683.1">
    <property type="nucleotide sequence ID" value="NC_007795.1"/>
</dbReference>
<dbReference type="PDB" id="5UJE">
    <property type="method" value="X-ray"/>
    <property type="resolution" value="2.50 A"/>
    <property type="chains" value="A=1-240"/>
</dbReference>
<dbReference type="PDBsum" id="5UJE"/>
<dbReference type="SMR" id="Q2G1M5"/>
<dbReference type="STRING" id="93061.SAOUHSC_00083"/>
<dbReference type="PaxDb" id="1280-SAXN108_0111"/>
<dbReference type="GeneID" id="3919461"/>
<dbReference type="KEGG" id="sao:SAOUHSC_00083"/>
<dbReference type="PATRIC" id="fig|1280.10341.peg.120"/>
<dbReference type="eggNOG" id="COG1475">
    <property type="taxonomic scope" value="Bacteria"/>
</dbReference>
<dbReference type="HOGENOM" id="CLU_095982_0_0_9"/>
<dbReference type="OrthoDB" id="2380647at2"/>
<dbReference type="BioCyc" id="MetaCyc:G1I0R-77-MONOMER"/>
<dbReference type="BRENDA" id="2.7.1.225">
    <property type="organism ID" value="3352"/>
</dbReference>
<dbReference type="SABIO-RK" id="Q2G1M5"/>
<dbReference type="Proteomes" id="UP000008816">
    <property type="component" value="Chromosome"/>
</dbReference>
<dbReference type="GO" id="GO:0005694">
    <property type="term" value="C:chromosome"/>
    <property type="evidence" value="ECO:0000318"/>
    <property type="project" value="GO_Central"/>
</dbReference>
<dbReference type="GO" id="GO:0005524">
    <property type="term" value="F:ATP binding"/>
    <property type="evidence" value="ECO:0007669"/>
    <property type="project" value="UniProtKB-KW"/>
</dbReference>
<dbReference type="GO" id="GO:0003677">
    <property type="term" value="F:DNA binding"/>
    <property type="evidence" value="ECO:0007669"/>
    <property type="project" value="UniProtKB-KW"/>
</dbReference>
<dbReference type="GO" id="GO:0016301">
    <property type="term" value="F:kinase activity"/>
    <property type="evidence" value="ECO:0007669"/>
    <property type="project" value="UniProtKB-KW"/>
</dbReference>
<dbReference type="GO" id="GO:0016773">
    <property type="term" value="F:phosphotransferase activity, alcohol group as acceptor"/>
    <property type="evidence" value="ECO:0000314"/>
    <property type="project" value="UniProtKB"/>
</dbReference>
<dbReference type="GO" id="GO:0007059">
    <property type="term" value="P:chromosome segregation"/>
    <property type="evidence" value="ECO:0000318"/>
    <property type="project" value="GO_Central"/>
</dbReference>
<dbReference type="GO" id="GO:0045881">
    <property type="term" value="P:positive regulation of sporulation resulting in formation of a cellular spore"/>
    <property type="evidence" value="ECO:0000318"/>
    <property type="project" value="GO_Central"/>
</dbReference>
<dbReference type="GO" id="GO:0019290">
    <property type="term" value="P:siderophore biosynthetic process"/>
    <property type="evidence" value="ECO:0000314"/>
    <property type="project" value="UniProtKB"/>
</dbReference>
<dbReference type="CDD" id="cd16388">
    <property type="entry name" value="SbnI_like_N"/>
    <property type="match status" value="1"/>
</dbReference>
<dbReference type="Gene3D" id="3.30.1760.10">
    <property type="entry name" value="Conserved hypothetical protein from pyrococcus furiosus pfu- 392566-001, domain 2"/>
    <property type="match status" value="1"/>
</dbReference>
<dbReference type="Gene3D" id="3.90.1530.10">
    <property type="entry name" value="Conserved hypothetical protein from pyrococcus furiosus pfu- 392566-001, ParB domain"/>
    <property type="match status" value="1"/>
</dbReference>
<dbReference type="InterPro" id="IPR050336">
    <property type="entry name" value="Chromosome_partition/occlusion"/>
</dbReference>
<dbReference type="InterPro" id="IPR003115">
    <property type="entry name" value="ParB/Sulfiredoxin_dom"/>
</dbReference>
<dbReference type="InterPro" id="IPR036086">
    <property type="entry name" value="ParB/Sulfiredoxin_sf"/>
</dbReference>
<dbReference type="InterPro" id="IPR016999">
    <property type="entry name" value="SbnI-like"/>
</dbReference>
<dbReference type="InterPro" id="IPR037953">
    <property type="entry name" value="SbnI-like_N"/>
</dbReference>
<dbReference type="InterPro" id="IPR023098">
    <property type="entry name" value="SerK/SbnI_C"/>
</dbReference>
<dbReference type="NCBIfam" id="NF033589">
    <property type="entry name" value="staphy_B_SbnI"/>
    <property type="match status" value="1"/>
</dbReference>
<dbReference type="PANTHER" id="PTHR33375">
    <property type="entry name" value="CHROMOSOME-PARTITIONING PROTEIN PARB-RELATED"/>
    <property type="match status" value="1"/>
</dbReference>
<dbReference type="PANTHER" id="PTHR33375:SF1">
    <property type="entry name" value="CHROMOSOME-PARTITIONING PROTEIN PARB-RELATED"/>
    <property type="match status" value="1"/>
</dbReference>
<dbReference type="Pfam" id="PF02195">
    <property type="entry name" value="ParBc"/>
    <property type="match status" value="1"/>
</dbReference>
<dbReference type="PIRSF" id="PIRSF032543">
    <property type="entry name" value="UCP032543_ParB-like"/>
    <property type="match status" value="1"/>
</dbReference>
<dbReference type="SMART" id="SM00470">
    <property type="entry name" value="ParB"/>
    <property type="match status" value="1"/>
</dbReference>
<dbReference type="SUPFAM" id="SSF110849">
    <property type="entry name" value="ParB/Sulfiredoxin"/>
    <property type="match status" value="1"/>
</dbReference>
<name>SBNI_STAA8</name>
<sequence length="254" mass="29633">MNHIHEHLKLVPVDKIDLHETFEPLRLEKTKSSIEADDFIRHPILVTAMQHGRYMVIDGVHRYTSLKALGCKKVPVQEIHETQYSISTWQHKVPFGVWWETLQQEHRLPWTTETRQEAPFITMCHGDTEQYLYTKDLGEAHFQVWEKVVASYSGCCSVERIAQGTYPCLSQQDVLMKYQPLSYKEIEAVVHKGETVPAGVTRFNISGRCLNLQVPLALLKQDDDVEQLRNWKQFLADKFANMRCYTEKVYLVEQ</sequence>
<proteinExistence type="evidence at protein level"/>
<reference key="1">
    <citation type="journal article" date="2004" name="Infect. Immun.">
        <title>Role of siderophore biosynthesis in virulence of Staphylococcus aureus: identification and characterization of genes involved in production of a siderophore.</title>
        <authorList>
            <person name="Dale S.E."/>
            <person name="Doherty-Kirby A."/>
            <person name="Lajoie G."/>
            <person name="Heinrichs D.E."/>
        </authorList>
    </citation>
    <scope>NUCLEOTIDE SEQUENCE [GENOMIC DNA]</scope>
    <scope>INDUCTION</scope>
</reference>
<reference key="2">
    <citation type="book" date="2006" name="Gram positive pathogens, 2nd edition">
        <title>The Staphylococcus aureus NCTC 8325 genome.</title>
        <editorList>
            <person name="Fischetti V."/>
            <person name="Novick R."/>
            <person name="Ferretti J."/>
            <person name="Portnoy D."/>
            <person name="Rood J."/>
        </editorList>
        <authorList>
            <person name="Gillaspy A.F."/>
            <person name="Worrell V."/>
            <person name="Orvis J."/>
            <person name="Roe B.A."/>
            <person name="Dyer D.W."/>
            <person name="Iandolo J.J."/>
        </authorList>
    </citation>
    <scope>NUCLEOTIDE SEQUENCE [LARGE SCALE GENOMIC DNA]</scope>
    <source>
        <strain>NCTC 8325 / PS 47</strain>
    </source>
</reference>
<reference key="3">
    <citation type="journal article" date="2016" name="J. Biol. Chem.">
        <title>A heme-responsive regulator controls synthesis of staphyloferrin B in Staphylococcus aureus.</title>
        <authorList>
            <person name="Laakso H.A."/>
            <person name="Marolda C.L."/>
            <person name="Pinter T.B."/>
            <person name="Stillman M.J."/>
            <person name="Heinrichs D.E."/>
        </authorList>
    </citation>
    <scope>FUNCTION</scope>
    <scope>ACTIVITY REGULATION</scope>
    <scope>PATHWAY</scope>
    <scope>SUBUNIT</scope>
    <scope>DISRUPTION PHENOTYPE</scope>
</reference>
<reference evidence="9" key="4">
    <citation type="journal article" date="2018" name="J. Biol. Chem.">
        <title>SbnI is a free serine kinase that generates O-phospho-L-serine for staphyloferrin B biosynthesis in Staphylococcus aureus.</title>
        <authorList>
            <person name="Verstraete M.M."/>
            <person name="Perez-Borrajero C."/>
            <person name="Brown K.L."/>
            <person name="Heinrichs D.E."/>
            <person name="Murphy M.E.P."/>
        </authorList>
    </citation>
    <scope>X-RAY CRYSTALLOGRAPHY (2.50 ANGSTROMS) OF 1-240</scope>
    <scope>FUNCTION AS A KINASE</scope>
    <scope>CATALYTIC ACTIVITY</scope>
    <scope>BIOPHYSICOCHEMICAL PROPERTIES</scope>
    <scope>PATHWAY</scope>
    <scope>SUBUNIT</scope>
    <scope>DISRUPTION PHENOTYPE</scope>
    <scope>MUTAGENESIS OF GLU-20 AND ASP-58</scope>
    <scope>ACTIVE SITE</scope>
</reference>
<evidence type="ECO:0000250" key="1">
    <source>
        <dbReference type="UniProtKB" id="Q5JD03"/>
    </source>
</evidence>
<evidence type="ECO:0000269" key="2">
    <source>
    </source>
</evidence>
<evidence type="ECO:0000269" key="3">
    <source>
    </source>
</evidence>
<evidence type="ECO:0000269" key="4">
    <source>
    </source>
</evidence>
<evidence type="ECO:0000303" key="5">
    <source>
    </source>
</evidence>
<evidence type="ECO:0000305" key="6"/>
<evidence type="ECO:0000305" key="7">
    <source>
    </source>
</evidence>
<evidence type="ECO:0000312" key="8">
    <source>
        <dbReference type="EMBL" id="ABD29266.1"/>
    </source>
</evidence>
<evidence type="ECO:0007744" key="9">
    <source>
        <dbReference type="PDB" id="5UJE"/>
    </source>
</evidence>
<evidence type="ECO:0007829" key="10">
    <source>
        <dbReference type="PDB" id="5UJE"/>
    </source>
</evidence>
<feature type="chain" id="PRO_0000447121" description="ATP-dependent L-serine kinase SbnI">
    <location>
        <begin position="1"/>
        <end position="254"/>
    </location>
</feature>
<feature type="active site" evidence="7">
    <location>
        <position position="20"/>
    </location>
</feature>
<feature type="binding site" evidence="1">
    <location>
        <position position="33"/>
    </location>
    <ligand>
        <name>ADP</name>
        <dbReference type="ChEBI" id="CHEBI:456216"/>
    </ligand>
</feature>
<feature type="binding site" evidence="1">
    <location>
        <position position="57"/>
    </location>
    <ligand>
        <name>O-phospho-L-serine</name>
        <dbReference type="ChEBI" id="CHEBI:57524"/>
    </ligand>
</feature>
<feature type="binding site" evidence="1">
    <location>
        <position position="58"/>
    </location>
    <ligand>
        <name>ADP</name>
        <dbReference type="ChEBI" id="CHEBI:456216"/>
    </ligand>
</feature>
<feature type="binding site" evidence="1">
    <location>
        <position position="59"/>
    </location>
    <ligand>
        <name>ADP</name>
        <dbReference type="ChEBI" id="CHEBI:456216"/>
    </ligand>
</feature>
<feature type="binding site" evidence="1">
    <location>
        <position position="59"/>
    </location>
    <ligand>
        <name>O-phospho-L-serine</name>
        <dbReference type="ChEBI" id="CHEBI:57524"/>
    </ligand>
</feature>
<feature type="binding site" evidence="1">
    <location>
        <position position="61"/>
    </location>
    <ligand>
        <name>ADP</name>
        <dbReference type="ChEBI" id="CHEBI:456216"/>
    </ligand>
</feature>
<feature type="binding site" evidence="1">
    <location>
        <position position="61"/>
    </location>
    <ligand>
        <name>O-phospho-L-serine</name>
        <dbReference type="ChEBI" id="CHEBI:57524"/>
    </ligand>
</feature>
<feature type="binding site" evidence="1">
    <location>
        <position position="62"/>
    </location>
    <ligand>
        <name>ADP</name>
        <dbReference type="ChEBI" id="CHEBI:456216"/>
    </ligand>
</feature>
<feature type="binding site" evidence="1">
    <location>
        <position position="98"/>
    </location>
    <ligand>
        <name>O-phospho-L-serine</name>
        <dbReference type="ChEBI" id="CHEBI:57524"/>
    </ligand>
</feature>
<feature type="binding site" evidence="1">
    <location>
        <position position="229"/>
    </location>
    <ligand>
        <name>O-phospho-L-serine</name>
        <dbReference type="ChEBI" id="CHEBI:57524"/>
    </ligand>
</feature>
<feature type="mutagenesis site" description="Loss of kinase activity." evidence="4">
    <original>E</original>
    <variation>A</variation>
    <location>
        <position position="20"/>
    </location>
</feature>
<feature type="mutagenesis site" description="Loss of kinase activity." evidence="4">
    <original>D</original>
    <variation>A</variation>
    <location>
        <position position="58"/>
    </location>
</feature>
<feature type="helix" evidence="10">
    <location>
        <begin position="3"/>
        <end position="6"/>
    </location>
</feature>
<feature type="strand" evidence="10">
    <location>
        <begin position="8"/>
        <end position="12"/>
    </location>
</feature>
<feature type="helix" evidence="10">
    <location>
        <begin position="13"/>
        <end position="15"/>
    </location>
</feature>
<feature type="helix" evidence="10">
    <location>
        <begin position="24"/>
        <end position="37"/>
    </location>
</feature>
<feature type="strand" evidence="10">
    <location>
        <begin position="39"/>
        <end position="42"/>
    </location>
</feature>
<feature type="strand" evidence="10">
    <location>
        <begin position="44"/>
        <end position="48"/>
    </location>
</feature>
<feature type="strand" evidence="10">
    <location>
        <begin position="54"/>
        <end position="58"/>
    </location>
</feature>
<feature type="helix" evidence="10">
    <location>
        <begin position="60"/>
        <end position="68"/>
    </location>
</feature>
<feature type="strand" evidence="10">
    <location>
        <begin position="72"/>
        <end position="79"/>
    </location>
</feature>
<feature type="turn" evidence="10">
    <location>
        <begin position="81"/>
        <end position="83"/>
    </location>
</feature>
<feature type="strand" evidence="10">
    <location>
        <begin position="84"/>
        <end position="88"/>
    </location>
</feature>
<feature type="strand" evidence="10">
    <location>
        <begin position="90"/>
        <end position="94"/>
    </location>
</feature>
<feature type="helix" evidence="10">
    <location>
        <begin position="98"/>
        <end position="106"/>
    </location>
</feature>
<feature type="strand" evidence="10">
    <location>
        <begin position="120"/>
        <end position="125"/>
    </location>
</feature>
<feature type="strand" evidence="10">
    <location>
        <begin position="128"/>
        <end position="132"/>
    </location>
</feature>
<feature type="helix" evidence="10">
    <location>
        <begin position="134"/>
        <end position="137"/>
    </location>
</feature>
<feature type="turn" evidence="10">
    <location>
        <begin position="141"/>
        <end position="143"/>
    </location>
</feature>
<feature type="helix" evidence="10">
    <location>
        <begin position="144"/>
        <end position="152"/>
    </location>
</feature>
<feature type="strand" evidence="10">
    <location>
        <begin position="159"/>
        <end position="161"/>
    </location>
</feature>
<feature type="turn" evidence="10">
    <location>
        <begin position="163"/>
        <end position="165"/>
    </location>
</feature>
<feature type="strand" evidence="10">
    <location>
        <begin position="171"/>
        <end position="178"/>
    </location>
</feature>
<feature type="helix" evidence="10">
    <location>
        <begin position="183"/>
        <end position="191"/>
    </location>
</feature>
<feature type="strand" evidence="10">
    <location>
        <begin position="200"/>
        <end position="205"/>
    </location>
</feature>
<feature type="helix" evidence="10">
    <location>
        <begin position="216"/>
        <end position="219"/>
    </location>
</feature>
<feature type="helix" evidence="10">
    <location>
        <begin position="224"/>
        <end position="237"/>
    </location>
</feature>
<comment type="function">
    <text evidence="3 4">Free serine kinase that uses ATP to phosphorylate L-serine to yield O-phospho-L-serine and ADP. O-phospho-L-serine serves as a substrate for SbnA and is a precursor for staphyloferrin B biosynthesis (PubMed:29483190). Is also a DNA-binding regulatory protein that senses heme to control gene expression for siderophore biosynthesis. Binds to DNA within the sbnC coding region and is required for expression of genes in the sbn operon from sbnD onward (PubMed:26534960).</text>
</comment>
<comment type="catalytic activity">
    <reaction evidence="4">
        <text>L-serine + ATP = O-phospho-L-serine + ADP + H(+)</text>
        <dbReference type="Rhea" id="RHEA:59112"/>
        <dbReference type="ChEBI" id="CHEBI:15378"/>
        <dbReference type="ChEBI" id="CHEBI:30616"/>
        <dbReference type="ChEBI" id="CHEBI:33384"/>
        <dbReference type="ChEBI" id="CHEBI:57524"/>
        <dbReference type="ChEBI" id="CHEBI:456216"/>
        <dbReference type="EC" id="2.7.1.225"/>
    </reaction>
    <physiologicalReaction direction="left-to-right" evidence="4">
        <dbReference type="Rhea" id="RHEA:59113"/>
    </physiologicalReaction>
</comment>
<comment type="activity regulation">
    <text evidence="3">Binds heme and heme binding inhibits DNA binding.</text>
</comment>
<comment type="biophysicochemical properties">
    <kinetics>
        <KM evidence="4">0.6 mM for ATP</KM>
        <KM evidence="4">340 mM for L-serine</KM>
        <text evidence="4">kcat is 3.9 min(-1) with ATP as substrate. kcat is 14.3 min(-1) with L-serine as substrate.</text>
    </kinetics>
</comment>
<comment type="pathway">
    <text evidence="3 4">Siderophore biosynthesis.</text>
</comment>
<comment type="subunit">
    <text evidence="3 4">Forms dimers and tetramers in solution (PubMed:26534960). Predominantly forms dimers (PubMed:29483190). Dimerization/oligomerization is not essential for kinase activity (PubMed:29483190).</text>
</comment>
<comment type="induction">
    <text evidence="2">Up-regulated under iron-deficient growth conditions. Repressed by Fur under iron-rich growth conditions.</text>
</comment>
<comment type="disruption phenotype">
    <text evidence="3 4">Mutant is impaired for staphyloferrin B production.</text>
</comment>
<protein>
    <recommendedName>
        <fullName evidence="6">ATP-dependent L-serine kinase SbnI</fullName>
        <ecNumber evidence="4">2.7.1.225</ecNumber>
    </recommendedName>
    <alternativeName>
        <fullName evidence="6">Staphyloferrin B biosynthesis regulatory protein SbnI</fullName>
    </alternativeName>
</protein>
<keyword id="KW-0002">3D-structure</keyword>
<keyword id="KW-0067">ATP-binding</keyword>
<keyword id="KW-0238">DNA-binding</keyword>
<keyword id="KW-0418">Kinase</keyword>
<keyword id="KW-0547">Nucleotide-binding</keyword>
<keyword id="KW-1185">Reference proteome</keyword>
<keyword id="KW-0808">Transferase</keyword>
<gene>
    <name evidence="5" type="primary">sbnI</name>
    <name evidence="8" type="ordered locus">SAOUHSC_00083</name>
</gene>